<name>SYFA_STRP3</name>
<organism>
    <name type="scientific">Streptococcus pyogenes serotype M3 (strain ATCC BAA-595 / MGAS315)</name>
    <dbReference type="NCBI Taxonomy" id="198466"/>
    <lineage>
        <taxon>Bacteria</taxon>
        <taxon>Bacillati</taxon>
        <taxon>Bacillota</taxon>
        <taxon>Bacilli</taxon>
        <taxon>Lactobacillales</taxon>
        <taxon>Streptococcaceae</taxon>
        <taxon>Streptococcus</taxon>
    </lineage>
</organism>
<keyword id="KW-0030">Aminoacyl-tRNA synthetase</keyword>
<keyword id="KW-0067">ATP-binding</keyword>
<keyword id="KW-0963">Cytoplasm</keyword>
<keyword id="KW-0436">Ligase</keyword>
<keyword id="KW-0460">Magnesium</keyword>
<keyword id="KW-0479">Metal-binding</keyword>
<keyword id="KW-0547">Nucleotide-binding</keyword>
<keyword id="KW-0648">Protein biosynthesis</keyword>
<accession>P0DG50</accession>
<accession>Q878H6</accession>
<accession>Q8K821</accession>
<comment type="catalytic activity">
    <reaction evidence="1">
        <text>tRNA(Phe) + L-phenylalanine + ATP = L-phenylalanyl-tRNA(Phe) + AMP + diphosphate + H(+)</text>
        <dbReference type="Rhea" id="RHEA:19413"/>
        <dbReference type="Rhea" id="RHEA-COMP:9668"/>
        <dbReference type="Rhea" id="RHEA-COMP:9699"/>
        <dbReference type="ChEBI" id="CHEBI:15378"/>
        <dbReference type="ChEBI" id="CHEBI:30616"/>
        <dbReference type="ChEBI" id="CHEBI:33019"/>
        <dbReference type="ChEBI" id="CHEBI:58095"/>
        <dbReference type="ChEBI" id="CHEBI:78442"/>
        <dbReference type="ChEBI" id="CHEBI:78531"/>
        <dbReference type="ChEBI" id="CHEBI:456215"/>
        <dbReference type="EC" id="6.1.1.20"/>
    </reaction>
</comment>
<comment type="cofactor">
    <cofactor evidence="1">
        <name>Mg(2+)</name>
        <dbReference type="ChEBI" id="CHEBI:18420"/>
    </cofactor>
    <text evidence="1">Binds 2 magnesium ions per tetramer.</text>
</comment>
<comment type="subunit">
    <text evidence="1">Tetramer of two alpha and two beta subunits.</text>
</comment>
<comment type="subcellular location">
    <subcellularLocation>
        <location evidence="1">Cytoplasm</location>
    </subcellularLocation>
</comment>
<comment type="similarity">
    <text evidence="1">Belongs to the class-II aminoacyl-tRNA synthetase family. Phe-tRNA synthetase alpha subunit type 1 subfamily.</text>
</comment>
<sequence>MDLQAQLEELKTKTLETLQSLTGNHTKELQDLRVAVLGKKGSLTELLKGLKDLSNDLRPVVGKQVNEVRDLLTKAFEEQAKIVEAAKIQAQLDAESIDVTLPGRQMTLGHRHVLTQTSEEIEDIFLGMGFQIVDGFEVEKDYYNFERMNLPKDHPARDMQDTFYITEEILLRTHTSPVQARTLDQHDFSKGPLKMVSPGRVFRRDTDDATHSHQFHQIEGLVVGKNISMGDLKGTLEMIIKKMFGEERSIRLRPSYFPFTEPSVEVDVSCFKCGGKGCNVCKKTGWIEILGAGMVHPSVLEMSGVDAKEYSGFAFGLGQERIAMLRYGINDIRGFYQGDQRFSEQFN</sequence>
<reference key="1">
    <citation type="journal article" date="2002" name="Proc. Natl. Acad. Sci. U.S.A.">
        <title>Genome sequence of a serotype M3 strain of group A Streptococcus: phage-encoded toxins, the high-virulence phenotype, and clone emergence.</title>
        <authorList>
            <person name="Beres S.B."/>
            <person name="Sylva G.L."/>
            <person name="Barbian K.D."/>
            <person name="Lei B."/>
            <person name="Hoff J.S."/>
            <person name="Mammarella N.D."/>
            <person name="Liu M.-Y."/>
            <person name="Smoot J.C."/>
            <person name="Porcella S.F."/>
            <person name="Parkins L.D."/>
            <person name="Campbell D.S."/>
            <person name="Smith T.M."/>
            <person name="McCormick J.K."/>
            <person name="Leung D.Y.M."/>
            <person name="Schlievert P.M."/>
            <person name="Musser J.M."/>
        </authorList>
    </citation>
    <scope>NUCLEOTIDE SEQUENCE [LARGE SCALE GENOMIC DNA]</scope>
    <source>
        <strain>ATCC BAA-595 / MGAS315</strain>
    </source>
</reference>
<evidence type="ECO:0000255" key="1">
    <source>
        <dbReference type="HAMAP-Rule" id="MF_00281"/>
    </source>
</evidence>
<feature type="chain" id="PRO_0000126776" description="Phenylalanine--tRNA ligase alpha subunit">
    <location>
        <begin position="1"/>
        <end position="347"/>
    </location>
</feature>
<feature type="binding site" evidence="1">
    <location>
        <position position="261"/>
    </location>
    <ligand>
        <name>Mg(2+)</name>
        <dbReference type="ChEBI" id="CHEBI:18420"/>
        <note>shared with beta subunit</note>
    </ligand>
</feature>
<proteinExistence type="inferred from homology"/>
<gene>
    <name evidence="1" type="primary">pheS</name>
    <name type="ordered locus">SpyM3_0506</name>
</gene>
<protein>
    <recommendedName>
        <fullName evidence="1">Phenylalanine--tRNA ligase alpha subunit</fullName>
        <ecNumber evidence="1">6.1.1.20</ecNumber>
    </recommendedName>
    <alternativeName>
        <fullName evidence="1">Phenylalanyl-tRNA synthetase alpha subunit</fullName>
        <shortName evidence="1">PheRS</shortName>
    </alternativeName>
</protein>
<dbReference type="EC" id="6.1.1.20" evidence="1"/>
<dbReference type="EMBL" id="AE014074">
    <property type="protein sequence ID" value="AAM79113.1"/>
    <property type="molecule type" value="Genomic_DNA"/>
</dbReference>
<dbReference type="RefSeq" id="WP_003057440.1">
    <property type="nucleotide sequence ID" value="NC_004070.1"/>
</dbReference>
<dbReference type="SMR" id="P0DG50"/>
<dbReference type="KEGG" id="spg:SpyM3_0506"/>
<dbReference type="HOGENOM" id="CLU_025086_0_1_9"/>
<dbReference type="Proteomes" id="UP000000564">
    <property type="component" value="Chromosome"/>
</dbReference>
<dbReference type="GO" id="GO:0005737">
    <property type="term" value="C:cytoplasm"/>
    <property type="evidence" value="ECO:0007669"/>
    <property type="project" value="UniProtKB-SubCell"/>
</dbReference>
<dbReference type="GO" id="GO:0005524">
    <property type="term" value="F:ATP binding"/>
    <property type="evidence" value="ECO:0007669"/>
    <property type="project" value="UniProtKB-UniRule"/>
</dbReference>
<dbReference type="GO" id="GO:0140096">
    <property type="term" value="F:catalytic activity, acting on a protein"/>
    <property type="evidence" value="ECO:0007669"/>
    <property type="project" value="UniProtKB-ARBA"/>
</dbReference>
<dbReference type="GO" id="GO:0000287">
    <property type="term" value="F:magnesium ion binding"/>
    <property type="evidence" value="ECO:0007669"/>
    <property type="project" value="UniProtKB-UniRule"/>
</dbReference>
<dbReference type="GO" id="GO:0004826">
    <property type="term" value="F:phenylalanine-tRNA ligase activity"/>
    <property type="evidence" value="ECO:0007669"/>
    <property type="project" value="UniProtKB-UniRule"/>
</dbReference>
<dbReference type="GO" id="GO:0016740">
    <property type="term" value="F:transferase activity"/>
    <property type="evidence" value="ECO:0007669"/>
    <property type="project" value="UniProtKB-ARBA"/>
</dbReference>
<dbReference type="GO" id="GO:0000049">
    <property type="term" value="F:tRNA binding"/>
    <property type="evidence" value="ECO:0007669"/>
    <property type="project" value="InterPro"/>
</dbReference>
<dbReference type="GO" id="GO:0006432">
    <property type="term" value="P:phenylalanyl-tRNA aminoacylation"/>
    <property type="evidence" value="ECO:0007669"/>
    <property type="project" value="UniProtKB-UniRule"/>
</dbReference>
<dbReference type="CDD" id="cd00496">
    <property type="entry name" value="PheRS_alpha_core"/>
    <property type="match status" value="1"/>
</dbReference>
<dbReference type="FunFam" id="3.30.930.10:FF:000003">
    <property type="entry name" value="Phenylalanine--tRNA ligase alpha subunit"/>
    <property type="match status" value="1"/>
</dbReference>
<dbReference type="Gene3D" id="3.30.930.10">
    <property type="entry name" value="Bira Bifunctional Protein, Domain 2"/>
    <property type="match status" value="1"/>
</dbReference>
<dbReference type="HAMAP" id="MF_00281">
    <property type="entry name" value="Phe_tRNA_synth_alpha1"/>
    <property type="match status" value="1"/>
</dbReference>
<dbReference type="InterPro" id="IPR006195">
    <property type="entry name" value="aa-tRNA-synth_II"/>
</dbReference>
<dbReference type="InterPro" id="IPR045864">
    <property type="entry name" value="aa-tRNA-synth_II/BPL/LPL"/>
</dbReference>
<dbReference type="InterPro" id="IPR004529">
    <property type="entry name" value="Phe-tRNA-synth_IIc_asu"/>
</dbReference>
<dbReference type="InterPro" id="IPR004188">
    <property type="entry name" value="Phe-tRNA_ligase_II_N"/>
</dbReference>
<dbReference type="InterPro" id="IPR022911">
    <property type="entry name" value="Phe_tRNA_ligase_alpha1_bac"/>
</dbReference>
<dbReference type="InterPro" id="IPR002319">
    <property type="entry name" value="Phenylalanyl-tRNA_Synthase"/>
</dbReference>
<dbReference type="InterPro" id="IPR010978">
    <property type="entry name" value="tRNA-bd_arm"/>
</dbReference>
<dbReference type="NCBIfam" id="TIGR00468">
    <property type="entry name" value="pheS"/>
    <property type="match status" value="1"/>
</dbReference>
<dbReference type="PANTHER" id="PTHR11538:SF41">
    <property type="entry name" value="PHENYLALANINE--TRNA LIGASE, MITOCHONDRIAL"/>
    <property type="match status" value="1"/>
</dbReference>
<dbReference type="PANTHER" id="PTHR11538">
    <property type="entry name" value="PHENYLALANYL-TRNA SYNTHETASE"/>
    <property type="match status" value="1"/>
</dbReference>
<dbReference type="Pfam" id="PF02912">
    <property type="entry name" value="Phe_tRNA-synt_N"/>
    <property type="match status" value="1"/>
</dbReference>
<dbReference type="Pfam" id="PF01409">
    <property type="entry name" value="tRNA-synt_2d"/>
    <property type="match status" value="1"/>
</dbReference>
<dbReference type="SUPFAM" id="SSF55681">
    <property type="entry name" value="Class II aaRS and biotin synthetases"/>
    <property type="match status" value="1"/>
</dbReference>
<dbReference type="SUPFAM" id="SSF46589">
    <property type="entry name" value="tRNA-binding arm"/>
    <property type="match status" value="1"/>
</dbReference>
<dbReference type="PROSITE" id="PS50862">
    <property type="entry name" value="AA_TRNA_LIGASE_II"/>
    <property type="match status" value="1"/>
</dbReference>